<gene>
    <name evidence="1" type="primary">rpmC</name>
    <name type="ordered locus">Veis_1272</name>
</gene>
<sequence>MKTTELRAKDVAGIEAEIKALQKAHFSLRMQKATQQLSNTSTLRTTRRAIARAKTILAQKQAAH</sequence>
<dbReference type="EMBL" id="CP000542">
    <property type="protein sequence ID" value="ABM57040.1"/>
    <property type="molecule type" value="Genomic_DNA"/>
</dbReference>
<dbReference type="RefSeq" id="WP_011809050.1">
    <property type="nucleotide sequence ID" value="NC_008786.1"/>
</dbReference>
<dbReference type="SMR" id="A1WHD3"/>
<dbReference type="STRING" id="391735.Veis_1272"/>
<dbReference type="GeneID" id="76459919"/>
<dbReference type="KEGG" id="vei:Veis_1272"/>
<dbReference type="eggNOG" id="COG0255">
    <property type="taxonomic scope" value="Bacteria"/>
</dbReference>
<dbReference type="HOGENOM" id="CLU_158491_1_1_4"/>
<dbReference type="OrthoDB" id="9815192at2"/>
<dbReference type="Proteomes" id="UP000000374">
    <property type="component" value="Chromosome"/>
</dbReference>
<dbReference type="GO" id="GO:1990904">
    <property type="term" value="C:ribonucleoprotein complex"/>
    <property type="evidence" value="ECO:0007669"/>
    <property type="project" value="UniProtKB-KW"/>
</dbReference>
<dbReference type="GO" id="GO:0005840">
    <property type="term" value="C:ribosome"/>
    <property type="evidence" value="ECO:0007669"/>
    <property type="project" value="UniProtKB-KW"/>
</dbReference>
<dbReference type="GO" id="GO:0003735">
    <property type="term" value="F:structural constituent of ribosome"/>
    <property type="evidence" value="ECO:0007669"/>
    <property type="project" value="InterPro"/>
</dbReference>
<dbReference type="GO" id="GO:0006412">
    <property type="term" value="P:translation"/>
    <property type="evidence" value="ECO:0007669"/>
    <property type="project" value="UniProtKB-UniRule"/>
</dbReference>
<dbReference type="CDD" id="cd00427">
    <property type="entry name" value="Ribosomal_L29_HIP"/>
    <property type="match status" value="1"/>
</dbReference>
<dbReference type="FunFam" id="1.10.287.310:FF:000001">
    <property type="entry name" value="50S ribosomal protein L29"/>
    <property type="match status" value="1"/>
</dbReference>
<dbReference type="Gene3D" id="1.10.287.310">
    <property type="match status" value="1"/>
</dbReference>
<dbReference type="HAMAP" id="MF_00374">
    <property type="entry name" value="Ribosomal_uL29"/>
    <property type="match status" value="1"/>
</dbReference>
<dbReference type="InterPro" id="IPR001854">
    <property type="entry name" value="Ribosomal_uL29"/>
</dbReference>
<dbReference type="InterPro" id="IPR018254">
    <property type="entry name" value="Ribosomal_uL29_CS"/>
</dbReference>
<dbReference type="InterPro" id="IPR036049">
    <property type="entry name" value="Ribosomal_uL29_sf"/>
</dbReference>
<dbReference type="NCBIfam" id="TIGR00012">
    <property type="entry name" value="L29"/>
    <property type="match status" value="1"/>
</dbReference>
<dbReference type="Pfam" id="PF00831">
    <property type="entry name" value="Ribosomal_L29"/>
    <property type="match status" value="1"/>
</dbReference>
<dbReference type="SUPFAM" id="SSF46561">
    <property type="entry name" value="Ribosomal protein L29 (L29p)"/>
    <property type="match status" value="1"/>
</dbReference>
<dbReference type="PROSITE" id="PS00579">
    <property type="entry name" value="RIBOSOMAL_L29"/>
    <property type="match status" value="1"/>
</dbReference>
<protein>
    <recommendedName>
        <fullName evidence="1">Large ribosomal subunit protein uL29</fullName>
    </recommendedName>
    <alternativeName>
        <fullName evidence="2">50S ribosomal protein L29</fullName>
    </alternativeName>
</protein>
<feature type="chain" id="PRO_1000007650" description="Large ribosomal subunit protein uL29">
    <location>
        <begin position="1"/>
        <end position="64"/>
    </location>
</feature>
<reference key="1">
    <citation type="submission" date="2006-12" db="EMBL/GenBank/DDBJ databases">
        <title>Complete sequence of chromosome 1 of Verminephrobacter eiseniae EF01-2.</title>
        <authorList>
            <person name="Copeland A."/>
            <person name="Lucas S."/>
            <person name="Lapidus A."/>
            <person name="Barry K."/>
            <person name="Detter J.C."/>
            <person name="Glavina del Rio T."/>
            <person name="Dalin E."/>
            <person name="Tice H."/>
            <person name="Pitluck S."/>
            <person name="Chertkov O."/>
            <person name="Brettin T."/>
            <person name="Bruce D."/>
            <person name="Han C."/>
            <person name="Tapia R."/>
            <person name="Gilna P."/>
            <person name="Schmutz J."/>
            <person name="Larimer F."/>
            <person name="Land M."/>
            <person name="Hauser L."/>
            <person name="Kyrpides N."/>
            <person name="Kim E."/>
            <person name="Stahl D."/>
            <person name="Richardson P."/>
        </authorList>
    </citation>
    <scope>NUCLEOTIDE SEQUENCE [LARGE SCALE GENOMIC DNA]</scope>
    <source>
        <strain>EF01-2</strain>
    </source>
</reference>
<comment type="similarity">
    <text evidence="1">Belongs to the universal ribosomal protein uL29 family.</text>
</comment>
<organism>
    <name type="scientific">Verminephrobacter eiseniae (strain EF01-2)</name>
    <dbReference type="NCBI Taxonomy" id="391735"/>
    <lineage>
        <taxon>Bacteria</taxon>
        <taxon>Pseudomonadati</taxon>
        <taxon>Pseudomonadota</taxon>
        <taxon>Betaproteobacteria</taxon>
        <taxon>Burkholderiales</taxon>
        <taxon>Comamonadaceae</taxon>
        <taxon>Verminephrobacter</taxon>
    </lineage>
</organism>
<name>RL29_VEREI</name>
<evidence type="ECO:0000255" key="1">
    <source>
        <dbReference type="HAMAP-Rule" id="MF_00374"/>
    </source>
</evidence>
<evidence type="ECO:0000305" key="2"/>
<keyword id="KW-1185">Reference proteome</keyword>
<keyword id="KW-0687">Ribonucleoprotein</keyword>
<keyword id="KW-0689">Ribosomal protein</keyword>
<accession>A1WHD3</accession>
<proteinExistence type="inferred from homology"/>